<reference key="1">
    <citation type="journal article" date="2000" name="Proc. Natl. Acad. Sci. U.S.A.">
        <title>Genome sequence of Halobacterium species NRC-1.</title>
        <authorList>
            <person name="Ng W.V."/>
            <person name="Kennedy S.P."/>
            <person name="Mahairas G.G."/>
            <person name="Berquist B."/>
            <person name="Pan M."/>
            <person name="Shukla H.D."/>
            <person name="Lasky S.R."/>
            <person name="Baliga N.S."/>
            <person name="Thorsson V."/>
            <person name="Sbrogna J."/>
            <person name="Swartzell S."/>
            <person name="Weir D."/>
            <person name="Hall J."/>
            <person name="Dahl T.A."/>
            <person name="Welti R."/>
            <person name="Goo Y.A."/>
            <person name="Leithauser B."/>
            <person name="Keller K."/>
            <person name="Cruz R."/>
            <person name="Danson M.J."/>
            <person name="Hough D.W."/>
            <person name="Maddocks D.G."/>
            <person name="Jablonski P.E."/>
            <person name="Krebs M.P."/>
            <person name="Angevine C.M."/>
            <person name="Dale H."/>
            <person name="Isenbarger T.A."/>
            <person name="Peck R.F."/>
            <person name="Pohlschroder M."/>
            <person name="Spudich J.L."/>
            <person name="Jung K.-H."/>
            <person name="Alam M."/>
            <person name="Freitas T."/>
            <person name="Hou S."/>
            <person name="Daniels C.J."/>
            <person name="Dennis P.P."/>
            <person name="Omer A.D."/>
            <person name="Ebhardt H."/>
            <person name="Lowe T.M."/>
            <person name="Liang P."/>
            <person name="Riley M."/>
            <person name="Hood L."/>
            <person name="DasSarma S."/>
        </authorList>
    </citation>
    <scope>NUCLEOTIDE SEQUENCE [LARGE SCALE GENOMIC DNA]</scope>
    <source>
        <strain>ATCC 700922 / JCM 11081 / NRC-1</strain>
    </source>
</reference>
<evidence type="ECO:0000255" key="1">
    <source>
        <dbReference type="HAMAP-Rule" id="MF_01117"/>
    </source>
</evidence>
<evidence type="ECO:0000305" key="2"/>
<dbReference type="EC" id="2.7.7.67" evidence="1"/>
<dbReference type="EMBL" id="AE004437">
    <property type="protein sequence ID" value="AAG20259.1"/>
    <property type="status" value="ALT_INIT"/>
    <property type="molecule type" value="Genomic_DNA"/>
</dbReference>
<dbReference type="PIR" id="G84361">
    <property type="entry name" value="G84361"/>
</dbReference>
<dbReference type="RefSeq" id="WP_012289436.1">
    <property type="nucleotide sequence ID" value="NC_002607.1"/>
</dbReference>
<dbReference type="SMR" id="Q9HNG1"/>
<dbReference type="FunCoup" id="Q9HNG1">
    <property type="interactions" value="1"/>
</dbReference>
<dbReference type="STRING" id="64091.VNG_2119C"/>
<dbReference type="PaxDb" id="64091-VNG_2119C"/>
<dbReference type="KEGG" id="hal:VNG_2119C"/>
<dbReference type="PATRIC" id="fig|64091.14.peg.1619"/>
<dbReference type="HOGENOM" id="CLU_105710_0_0_2"/>
<dbReference type="InParanoid" id="Q9HNG1"/>
<dbReference type="OrthoDB" id="45383at2157"/>
<dbReference type="UniPathway" id="UPA00940"/>
<dbReference type="Proteomes" id="UP000000554">
    <property type="component" value="Chromosome"/>
</dbReference>
<dbReference type="GO" id="GO:0005886">
    <property type="term" value="C:plasma membrane"/>
    <property type="evidence" value="ECO:0007669"/>
    <property type="project" value="UniProtKB-SubCell"/>
</dbReference>
<dbReference type="GO" id="GO:0043338">
    <property type="term" value="F:CDP-2,3-bis-(O-geranylgeranyl)-sn-glycerol synthase activity"/>
    <property type="evidence" value="ECO:0007669"/>
    <property type="project" value="UniProtKB-EC"/>
</dbReference>
<dbReference type="GO" id="GO:0046474">
    <property type="term" value="P:glycerophospholipid biosynthetic process"/>
    <property type="evidence" value="ECO:0007669"/>
    <property type="project" value="UniProtKB-UniRule"/>
</dbReference>
<dbReference type="HAMAP" id="MF_01117">
    <property type="entry name" value="CDP_archaeol_synth"/>
    <property type="match status" value="1"/>
</dbReference>
<dbReference type="InterPro" id="IPR032690">
    <property type="entry name" value="CarS"/>
</dbReference>
<dbReference type="InterPro" id="IPR002726">
    <property type="entry name" value="CarS_archaea"/>
</dbReference>
<dbReference type="NCBIfam" id="NF003114">
    <property type="entry name" value="PRK04032.1"/>
    <property type="match status" value="1"/>
</dbReference>
<dbReference type="PANTHER" id="PTHR39650">
    <property type="entry name" value="CDP-ARCHAEOL SYNTHASE"/>
    <property type="match status" value="1"/>
</dbReference>
<dbReference type="PANTHER" id="PTHR39650:SF1">
    <property type="entry name" value="CDP-ARCHAEOL SYNTHASE"/>
    <property type="match status" value="1"/>
</dbReference>
<dbReference type="Pfam" id="PF01864">
    <property type="entry name" value="CarS-like"/>
    <property type="match status" value="1"/>
</dbReference>
<accession>Q9HNG1</accession>
<comment type="function">
    <text evidence="1">Catalyzes the formation of CDP-2,3-bis-(O-geranylgeranyl)-sn-glycerol (CDP-archaeol) from 2,3-bis-(O-geranylgeranyl)-sn-glycerol 1-phosphate (DGGGP) and CTP. This reaction is the third ether-bond-formation step in the biosynthesis of archaeal membrane lipids.</text>
</comment>
<comment type="catalytic activity">
    <reaction evidence="1">
        <text>2,3-bis-O-(geranylgeranyl)-sn-glycerol 1-phosphate + CTP + H(+) = CDP-2,3-bis-O-(geranylgeranyl)-sn-glycerol + diphosphate</text>
        <dbReference type="Rhea" id="RHEA:25690"/>
        <dbReference type="ChEBI" id="CHEBI:15378"/>
        <dbReference type="ChEBI" id="CHEBI:33019"/>
        <dbReference type="ChEBI" id="CHEBI:37563"/>
        <dbReference type="ChEBI" id="CHEBI:58837"/>
        <dbReference type="ChEBI" id="CHEBI:58838"/>
        <dbReference type="EC" id="2.7.7.67"/>
    </reaction>
</comment>
<comment type="cofactor">
    <cofactor evidence="1">
        <name>Mg(2+)</name>
        <dbReference type="ChEBI" id="CHEBI:18420"/>
    </cofactor>
</comment>
<comment type="pathway">
    <text evidence="1">Membrane lipid metabolism; glycerophospholipid metabolism.</text>
</comment>
<comment type="subcellular location">
    <subcellularLocation>
        <location evidence="1">Cell membrane</location>
        <topology evidence="1">Multi-pass membrane protein</topology>
    </subcellularLocation>
</comment>
<comment type="similarity">
    <text evidence="1">Belongs to the CDP-archaeol synthase family.</text>
</comment>
<comment type="sequence caution" evidence="2">
    <conflict type="erroneous initiation">
        <sequence resource="EMBL-CDS" id="AAG20259"/>
    </conflict>
</comment>
<feature type="chain" id="PRO_0000094168" description="CDP-archaeol synthase">
    <location>
        <begin position="1"/>
        <end position="181"/>
    </location>
</feature>
<feature type="transmembrane region" description="Helical" evidence="1">
    <location>
        <begin position="7"/>
        <end position="27"/>
    </location>
</feature>
<feature type="transmembrane region" description="Helical" evidence="1">
    <location>
        <begin position="55"/>
        <end position="75"/>
    </location>
</feature>
<feature type="transmembrane region" description="Helical" evidence="1">
    <location>
        <begin position="80"/>
        <end position="100"/>
    </location>
</feature>
<feature type="transmembrane region" description="Helical" evidence="1">
    <location>
        <begin position="128"/>
        <end position="148"/>
    </location>
</feature>
<feature type="transmembrane region" description="Helical" evidence="1">
    <location>
        <begin position="150"/>
        <end position="170"/>
    </location>
</feature>
<keyword id="KW-1003">Cell membrane</keyword>
<keyword id="KW-0444">Lipid biosynthesis</keyword>
<keyword id="KW-0443">Lipid metabolism</keyword>
<keyword id="KW-0460">Magnesium</keyword>
<keyword id="KW-0472">Membrane</keyword>
<keyword id="KW-0594">Phospholipid biosynthesis</keyword>
<keyword id="KW-1208">Phospholipid metabolism</keyword>
<keyword id="KW-1185">Reference proteome</keyword>
<keyword id="KW-0808">Transferase</keyword>
<keyword id="KW-0812">Transmembrane</keyword>
<keyword id="KW-1133">Transmembrane helix</keyword>
<name>CDPAS_HALSA</name>
<sequence>MDLVGTVVVAVWAMLPAYVPNNAAVLAGGGRPIDGGRSLGGRRLLGDGKTWRGTAVGTAAGVALAVALNALRPAAADALGVVLPAFPPAAMGTLAFGAMVGDIAASFLKRRTGRQRGAAFPVVDQLDFVVVALALTALAVPAWVGDTFGLPVLVTVAVLTPALHLLTNGIAYALGVKDEPW</sequence>
<organism>
    <name type="scientific">Halobacterium salinarum (strain ATCC 700922 / JCM 11081 / NRC-1)</name>
    <name type="common">Halobacterium halobium</name>
    <dbReference type="NCBI Taxonomy" id="64091"/>
    <lineage>
        <taxon>Archaea</taxon>
        <taxon>Methanobacteriati</taxon>
        <taxon>Methanobacteriota</taxon>
        <taxon>Stenosarchaea group</taxon>
        <taxon>Halobacteria</taxon>
        <taxon>Halobacteriales</taxon>
        <taxon>Halobacteriaceae</taxon>
        <taxon>Halobacterium</taxon>
        <taxon>Halobacterium salinarum NRC-34001</taxon>
    </lineage>
</organism>
<protein>
    <recommendedName>
        <fullName evidence="1">CDP-archaeol synthase</fullName>
        <ecNumber evidence="1">2.7.7.67</ecNumber>
    </recommendedName>
    <alternativeName>
        <fullName evidence="1">CDP-2,3-bis-(O-geranylgeranyl)-sn-glycerol synthase</fullName>
    </alternativeName>
</protein>
<gene>
    <name evidence="1" type="primary">carS</name>
    <name type="ordered locus">VNG_2119C</name>
</gene>
<proteinExistence type="inferred from homology"/>